<feature type="transit peptide" description="Chloroplast" evidence="2">
    <location>
        <begin position="1"/>
        <end position="79"/>
    </location>
</feature>
<feature type="chain" id="PRO_0000441882" description="Transcription termination factor MTERF4, chloroplastic">
    <location>
        <begin position="80"/>
        <end position="508"/>
    </location>
</feature>
<feature type="region of interest" description="Disordered" evidence="3">
    <location>
        <begin position="28"/>
        <end position="69"/>
    </location>
</feature>
<feature type="region of interest" description="Disordered" evidence="3">
    <location>
        <begin position="475"/>
        <end position="508"/>
    </location>
</feature>
<feature type="compositionally biased region" description="Low complexity" evidence="3">
    <location>
        <begin position="28"/>
        <end position="49"/>
    </location>
</feature>
<feature type="compositionally biased region" description="Acidic residues" evidence="3">
    <location>
        <begin position="484"/>
        <end position="508"/>
    </location>
</feature>
<comment type="function">
    <text evidence="1">Transcription termination factor required for processing and steady-state levels of plastid transcripts. Required for splicing of the chloroplastic group II intron. Required for the accumulation of 16S and 23S ribosomes.</text>
</comment>
<comment type="subcellular location">
    <subcellularLocation>
        <location evidence="1">Plastid</location>
        <location evidence="1">Chloroplast stroma</location>
    </subcellularLocation>
</comment>
<comment type="similarity">
    <text evidence="4">Belongs to the mTERF family.</text>
</comment>
<sequence length="508" mass="56686">MMKSLFLFSAHPKPPPLPPSPHLRKLLRLTASASTSASSPPRAGCSRGPAHARPRPSPRPSPSSSLYARPSLLDMERGRAARRADVDAFLASLGVDPGELAGLELPATVDVMRERVEFLHSLDLSNEDLAAYPLALGCSVRKNMVPVLDYLGKLGVRQDALPDLLRRYPQVLHASVVVDLAPVVKYLQGMDVRPHDVPRVLERYPELLGFKLEGTMSTSIAYLVGIGVARRQVGSVITRFPEVLGMRVGKIIKPFVEHLEGIGLQRLAIARIIEKKPYVLGFGLEDKVKPNIEALLEFGVRKEALAFIVAQYPDILGIELRDKLATQQSLFESSILVSSEDFGRVIERMPQAISLGRTAVLKHVNFLTSCGFLLSQVSKMVVACPQLLALNMDIMKMSFEYFQNEMERDLEELVEFPAFFTYGLESTVRPRHEMVAKKGFTCSLAWLLNCSDAKFDERMKYDTIGIEEMEVDNSFDTNTLSERVEDEVEDEDLDEDSDYDSTDDEFIE</sequence>
<accession>Q6AUK6</accession>
<gene>
    <name evidence="6" type="ordered locus">Os05g0404000</name>
    <name evidence="4" type="ordered locus">LOC_Os05g33500</name>
    <name evidence="7" type="ORF">OsJ_18494</name>
    <name evidence="5" type="ORF">OSJNBb0006J12.15</name>
</gene>
<dbReference type="EMBL" id="AC120991">
    <property type="protein sequence ID" value="AAT85216.1"/>
    <property type="molecule type" value="Genomic_DNA"/>
</dbReference>
<dbReference type="EMBL" id="AP008211">
    <property type="protein sequence ID" value="BAF17414.1"/>
    <property type="molecule type" value="Genomic_DNA"/>
</dbReference>
<dbReference type="EMBL" id="AP014961">
    <property type="protein sequence ID" value="BAS93934.1"/>
    <property type="molecule type" value="Genomic_DNA"/>
</dbReference>
<dbReference type="EMBL" id="CM000142">
    <property type="protein sequence ID" value="EEE63676.1"/>
    <property type="molecule type" value="Genomic_DNA"/>
</dbReference>
<dbReference type="EMBL" id="AK102821">
    <property type="protein sequence ID" value="BAG95733.1"/>
    <property type="molecule type" value="mRNA"/>
</dbReference>
<dbReference type="RefSeq" id="XP_015637874.1">
    <property type="nucleotide sequence ID" value="XM_015782388.1"/>
</dbReference>
<dbReference type="SMR" id="Q6AUK6"/>
<dbReference type="FunCoup" id="Q6AUK6">
    <property type="interactions" value="2303"/>
</dbReference>
<dbReference type="STRING" id="39947.Q6AUK6"/>
<dbReference type="PaxDb" id="39947-Q6AUK6"/>
<dbReference type="EnsemblPlants" id="Os05t0404000-01">
    <property type="protein sequence ID" value="Os05t0404000-01"/>
    <property type="gene ID" value="Os05g0404000"/>
</dbReference>
<dbReference type="Gramene" id="Os05t0404000-01">
    <property type="protein sequence ID" value="Os05t0404000-01"/>
    <property type="gene ID" value="Os05g0404000"/>
</dbReference>
<dbReference type="KEGG" id="dosa:Os05g0404000"/>
<dbReference type="eggNOG" id="KOG1267">
    <property type="taxonomic scope" value="Eukaryota"/>
</dbReference>
<dbReference type="HOGENOM" id="CLU_024229_1_1_1"/>
<dbReference type="InParanoid" id="Q6AUK6"/>
<dbReference type="OMA" id="RMDYDTI"/>
<dbReference type="OrthoDB" id="637682at2759"/>
<dbReference type="Proteomes" id="UP000000763">
    <property type="component" value="Chromosome 5"/>
</dbReference>
<dbReference type="Proteomes" id="UP000007752">
    <property type="component" value="Chromosome 5"/>
</dbReference>
<dbReference type="Proteomes" id="UP000059680">
    <property type="component" value="Chromosome 5"/>
</dbReference>
<dbReference type="GO" id="GO:0009570">
    <property type="term" value="C:chloroplast stroma"/>
    <property type="evidence" value="ECO:0007669"/>
    <property type="project" value="UniProtKB-SubCell"/>
</dbReference>
<dbReference type="GO" id="GO:0003690">
    <property type="term" value="F:double-stranded DNA binding"/>
    <property type="evidence" value="ECO:0007669"/>
    <property type="project" value="InterPro"/>
</dbReference>
<dbReference type="GO" id="GO:0032502">
    <property type="term" value="P:developmental process"/>
    <property type="evidence" value="ECO:0000318"/>
    <property type="project" value="GO_Central"/>
</dbReference>
<dbReference type="GO" id="GO:0006353">
    <property type="term" value="P:DNA-templated transcription termination"/>
    <property type="evidence" value="ECO:0007669"/>
    <property type="project" value="UniProtKB-KW"/>
</dbReference>
<dbReference type="GO" id="GO:0006355">
    <property type="term" value="P:regulation of DNA-templated transcription"/>
    <property type="evidence" value="ECO:0007669"/>
    <property type="project" value="InterPro"/>
</dbReference>
<dbReference type="FunFam" id="1.25.70.10:FF:000005">
    <property type="entry name" value="Transcription termination factor MTERF4, chloroplastic"/>
    <property type="match status" value="1"/>
</dbReference>
<dbReference type="FunFam" id="1.25.70.10:FF:000004">
    <property type="entry name" value="Transcription termination factor mterf4, chloroplastic"/>
    <property type="match status" value="1"/>
</dbReference>
<dbReference type="Gene3D" id="1.25.70.10">
    <property type="entry name" value="Transcription termination factor 3, mitochondrial"/>
    <property type="match status" value="2"/>
</dbReference>
<dbReference type="InterPro" id="IPR003690">
    <property type="entry name" value="MTERF"/>
</dbReference>
<dbReference type="InterPro" id="IPR038538">
    <property type="entry name" value="MTERF_sf"/>
</dbReference>
<dbReference type="PANTHER" id="PTHR13068">
    <property type="entry name" value="CGI-12 PROTEIN-RELATED"/>
    <property type="match status" value="1"/>
</dbReference>
<dbReference type="PANTHER" id="PTHR13068:SF109">
    <property type="entry name" value="TRANSCRIPTION TERMINATION FACTOR MTERF4, CHLOROPLASTIC"/>
    <property type="match status" value="1"/>
</dbReference>
<dbReference type="Pfam" id="PF02536">
    <property type="entry name" value="mTERF"/>
    <property type="match status" value="1"/>
</dbReference>
<dbReference type="SMART" id="SM00733">
    <property type="entry name" value="Mterf"/>
    <property type="match status" value="9"/>
</dbReference>
<keyword id="KW-0150">Chloroplast</keyword>
<keyword id="KW-0934">Plastid</keyword>
<keyword id="KW-1185">Reference proteome</keyword>
<keyword id="KW-0804">Transcription</keyword>
<keyword id="KW-0805">Transcription regulation</keyword>
<keyword id="KW-0806">Transcription termination</keyword>
<keyword id="KW-0809">Transit peptide</keyword>
<evidence type="ECO:0000250" key="1">
    <source>
        <dbReference type="UniProtKB" id="B6TGN4"/>
    </source>
</evidence>
<evidence type="ECO:0000255" key="2"/>
<evidence type="ECO:0000256" key="3">
    <source>
        <dbReference type="SAM" id="MobiDB-lite"/>
    </source>
</evidence>
<evidence type="ECO:0000305" key="4"/>
<evidence type="ECO:0000312" key="5">
    <source>
        <dbReference type="EMBL" id="AAT85216.1"/>
    </source>
</evidence>
<evidence type="ECO:0000312" key="6">
    <source>
        <dbReference type="EMBL" id="BAF17414.1"/>
    </source>
</evidence>
<evidence type="ECO:0000312" key="7">
    <source>
        <dbReference type="EMBL" id="EEE63676.1"/>
    </source>
</evidence>
<proteinExistence type="evidence at transcript level"/>
<reference key="1">
    <citation type="journal article" date="2005" name="Mol. Genet. Genomics">
        <title>A fine physical map of the rice chromosome 5.</title>
        <authorList>
            <person name="Cheng C.-H."/>
            <person name="Chung M.C."/>
            <person name="Liu S.-M."/>
            <person name="Chen S.-K."/>
            <person name="Kao F.Y."/>
            <person name="Lin S.-J."/>
            <person name="Hsiao S.-H."/>
            <person name="Tseng I.C."/>
            <person name="Hsing Y.-I.C."/>
            <person name="Wu H.-P."/>
            <person name="Chen C.-S."/>
            <person name="Shaw J.-F."/>
            <person name="Wu J."/>
            <person name="Matsumoto T."/>
            <person name="Sasaki T."/>
            <person name="Chen H.-C."/>
            <person name="Chow T.-Y."/>
        </authorList>
    </citation>
    <scope>NUCLEOTIDE SEQUENCE [LARGE SCALE GENOMIC DNA]</scope>
    <source>
        <strain>cv. Nipponbare</strain>
    </source>
</reference>
<reference key="2">
    <citation type="journal article" date="2005" name="Nature">
        <title>The map-based sequence of the rice genome.</title>
        <authorList>
            <consortium name="International rice genome sequencing project (IRGSP)"/>
        </authorList>
    </citation>
    <scope>NUCLEOTIDE SEQUENCE [LARGE SCALE GENOMIC DNA]</scope>
    <source>
        <strain>cv. Nipponbare</strain>
    </source>
</reference>
<reference key="3">
    <citation type="journal article" date="2008" name="Nucleic Acids Res.">
        <title>The rice annotation project database (RAP-DB): 2008 update.</title>
        <authorList>
            <consortium name="The rice annotation project (RAP)"/>
        </authorList>
    </citation>
    <scope>GENOME REANNOTATION</scope>
    <source>
        <strain>cv. Nipponbare</strain>
    </source>
</reference>
<reference key="4">
    <citation type="journal article" date="2013" name="Rice">
        <title>Improvement of the Oryza sativa Nipponbare reference genome using next generation sequence and optical map data.</title>
        <authorList>
            <person name="Kawahara Y."/>
            <person name="de la Bastide M."/>
            <person name="Hamilton J.P."/>
            <person name="Kanamori H."/>
            <person name="McCombie W.R."/>
            <person name="Ouyang S."/>
            <person name="Schwartz D.C."/>
            <person name="Tanaka T."/>
            <person name="Wu J."/>
            <person name="Zhou S."/>
            <person name="Childs K.L."/>
            <person name="Davidson R.M."/>
            <person name="Lin H."/>
            <person name="Quesada-Ocampo L."/>
            <person name="Vaillancourt B."/>
            <person name="Sakai H."/>
            <person name="Lee S.S."/>
            <person name="Kim J."/>
            <person name="Numa H."/>
            <person name="Itoh T."/>
            <person name="Buell C.R."/>
            <person name="Matsumoto T."/>
        </authorList>
    </citation>
    <scope>GENOME REANNOTATION</scope>
    <source>
        <strain>cv. Nipponbare</strain>
    </source>
</reference>
<reference key="5">
    <citation type="journal article" date="2005" name="PLoS Biol.">
        <title>The genomes of Oryza sativa: a history of duplications.</title>
        <authorList>
            <person name="Yu J."/>
            <person name="Wang J."/>
            <person name="Lin W."/>
            <person name="Li S."/>
            <person name="Li H."/>
            <person name="Zhou J."/>
            <person name="Ni P."/>
            <person name="Dong W."/>
            <person name="Hu S."/>
            <person name="Zeng C."/>
            <person name="Zhang J."/>
            <person name="Zhang Y."/>
            <person name="Li R."/>
            <person name="Xu Z."/>
            <person name="Li S."/>
            <person name="Li X."/>
            <person name="Zheng H."/>
            <person name="Cong L."/>
            <person name="Lin L."/>
            <person name="Yin J."/>
            <person name="Geng J."/>
            <person name="Li G."/>
            <person name="Shi J."/>
            <person name="Liu J."/>
            <person name="Lv H."/>
            <person name="Li J."/>
            <person name="Wang J."/>
            <person name="Deng Y."/>
            <person name="Ran L."/>
            <person name="Shi X."/>
            <person name="Wang X."/>
            <person name="Wu Q."/>
            <person name="Li C."/>
            <person name="Ren X."/>
            <person name="Wang J."/>
            <person name="Wang X."/>
            <person name="Li D."/>
            <person name="Liu D."/>
            <person name="Zhang X."/>
            <person name="Ji Z."/>
            <person name="Zhao W."/>
            <person name="Sun Y."/>
            <person name="Zhang Z."/>
            <person name="Bao J."/>
            <person name="Han Y."/>
            <person name="Dong L."/>
            <person name="Ji J."/>
            <person name="Chen P."/>
            <person name="Wu S."/>
            <person name="Liu J."/>
            <person name="Xiao Y."/>
            <person name="Bu D."/>
            <person name="Tan J."/>
            <person name="Yang L."/>
            <person name="Ye C."/>
            <person name="Zhang J."/>
            <person name="Xu J."/>
            <person name="Zhou Y."/>
            <person name="Yu Y."/>
            <person name="Zhang B."/>
            <person name="Zhuang S."/>
            <person name="Wei H."/>
            <person name="Liu B."/>
            <person name="Lei M."/>
            <person name="Yu H."/>
            <person name="Li Y."/>
            <person name="Xu H."/>
            <person name="Wei S."/>
            <person name="He X."/>
            <person name="Fang L."/>
            <person name="Zhang Z."/>
            <person name="Zhang Y."/>
            <person name="Huang X."/>
            <person name="Su Z."/>
            <person name="Tong W."/>
            <person name="Li J."/>
            <person name="Tong Z."/>
            <person name="Li S."/>
            <person name="Ye J."/>
            <person name="Wang L."/>
            <person name="Fang L."/>
            <person name="Lei T."/>
            <person name="Chen C.-S."/>
            <person name="Chen H.-C."/>
            <person name="Xu Z."/>
            <person name="Li H."/>
            <person name="Huang H."/>
            <person name="Zhang F."/>
            <person name="Xu H."/>
            <person name="Li N."/>
            <person name="Zhao C."/>
            <person name="Li S."/>
            <person name="Dong L."/>
            <person name="Huang Y."/>
            <person name="Li L."/>
            <person name="Xi Y."/>
            <person name="Qi Q."/>
            <person name="Li W."/>
            <person name="Zhang B."/>
            <person name="Hu W."/>
            <person name="Zhang Y."/>
            <person name="Tian X."/>
            <person name="Jiao Y."/>
            <person name="Liang X."/>
            <person name="Jin J."/>
            <person name="Gao L."/>
            <person name="Zheng W."/>
            <person name="Hao B."/>
            <person name="Liu S.-M."/>
            <person name="Wang W."/>
            <person name="Yuan L."/>
            <person name="Cao M."/>
            <person name="McDermott J."/>
            <person name="Samudrala R."/>
            <person name="Wang J."/>
            <person name="Wong G.K.-S."/>
            <person name="Yang H."/>
        </authorList>
    </citation>
    <scope>NUCLEOTIDE SEQUENCE [LARGE SCALE GENOMIC DNA]</scope>
    <source>
        <strain>cv. Nipponbare</strain>
    </source>
</reference>
<reference key="6">
    <citation type="journal article" date="2003" name="Science">
        <title>Collection, mapping, and annotation of over 28,000 cDNA clones from japonica rice.</title>
        <authorList>
            <consortium name="The rice full-length cDNA consortium"/>
        </authorList>
    </citation>
    <scope>NUCLEOTIDE SEQUENCE [LARGE SCALE MRNA]</scope>
    <source>
        <strain>cv. Nipponbare</strain>
    </source>
</reference>
<protein>
    <recommendedName>
        <fullName evidence="4">Transcription termination factor MTERF4, chloroplastic</fullName>
    </recommendedName>
    <alternativeName>
        <fullName evidence="4">Mitochondrial transcription termination factor 4</fullName>
    </alternativeName>
</protein>
<name>MTEF4_ORYSJ</name>
<organism>
    <name type="scientific">Oryza sativa subsp. japonica</name>
    <name type="common">Rice</name>
    <dbReference type="NCBI Taxonomy" id="39947"/>
    <lineage>
        <taxon>Eukaryota</taxon>
        <taxon>Viridiplantae</taxon>
        <taxon>Streptophyta</taxon>
        <taxon>Embryophyta</taxon>
        <taxon>Tracheophyta</taxon>
        <taxon>Spermatophyta</taxon>
        <taxon>Magnoliopsida</taxon>
        <taxon>Liliopsida</taxon>
        <taxon>Poales</taxon>
        <taxon>Poaceae</taxon>
        <taxon>BOP clade</taxon>
        <taxon>Oryzoideae</taxon>
        <taxon>Oryzeae</taxon>
        <taxon>Oryzinae</taxon>
        <taxon>Oryza</taxon>
        <taxon>Oryza sativa</taxon>
    </lineage>
</organism>